<protein>
    <recommendedName>
        <fullName evidence="1">1-deoxy-D-xylulose-5-phosphate synthase</fullName>
        <ecNumber evidence="1">2.2.1.7</ecNumber>
    </recommendedName>
    <alternativeName>
        <fullName evidence="1">1-deoxyxylulose-5-phosphate synthase</fullName>
        <shortName evidence="1">DXP synthase</shortName>
        <shortName evidence="1">DXPS</shortName>
    </alternativeName>
</protein>
<organism>
    <name type="scientific">Chelativorans sp. (strain BNC1)</name>
    <dbReference type="NCBI Taxonomy" id="266779"/>
    <lineage>
        <taxon>Bacteria</taxon>
        <taxon>Pseudomonadati</taxon>
        <taxon>Pseudomonadota</taxon>
        <taxon>Alphaproteobacteria</taxon>
        <taxon>Hyphomicrobiales</taxon>
        <taxon>Phyllobacteriaceae</taxon>
        <taxon>Chelativorans</taxon>
    </lineage>
</organism>
<gene>
    <name evidence="1" type="primary">dxs</name>
    <name type="ordered locus">Meso_0735</name>
</gene>
<dbReference type="EC" id="2.2.1.7" evidence="1"/>
<dbReference type="EMBL" id="CP000390">
    <property type="protein sequence ID" value="ABG62135.1"/>
    <property type="molecule type" value="Genomic_DNA"/>
</dbReference>
<dbReference type="SMR" id="Q11KE0"/>
<dbReference type="STRING" id="266779.Meso_0735"/>
<dbReference type="KEGG" id="mes:Meso_0735"/>
<dbReference type="eggNOG" id="COG1154">
    <property type="taxonomic scope" value="Bacteria"/>
</dbReference>
<dbReference type="HOGENOM" id="CLU_009227_1_4_5"/>
<dbReference type="UniPathway" id="UPA00064">
    <property type="reaction ID" value="UER00091"/>
</dbReference>
<dbReference type="GO" id="GO:0008661">
    <property type="term" value="F:1-deoxy-D-xylulose-5-phosphate synthase activity"/>
    <property type="evidence" value="ECO:0007669"/>
    <property type="project" value="UniProtKB-UniRule"/>
</dbReference>
<dbReference type="GO" id="GO:0000287">
    <property type="term" value="F:magnesium ion binding"/>
    <property type="evidence" value="ECO:0007669"/>
    <property type="project" value="UniProtKB-UniRule"/>
</dbReference>
<dbReference type="GO" id="GO:0030976">
    <property type="term" value="F:thiamine pyrophosphate binding"/>
    <property type="evidence" value="ECO:0007669"/>
    <property type="project" value="UniProtKB-UniRule"/>
</dbReference>
<dbReference type="GO" id="GO:0052865">
    <property type="term" value="P:1-deoxy-D-xylulose 5-phosphate biosynthetic process"/>
    <property type="evidence" value="ECO:0007669"/>
    <property type="project" value="UniProtKB-UniPathway"/>
</dbReference>
<dbReference type="GO" id="GO:0019682">
    <property type="term" value="P:glyceraldehyde-3-phosphate metabolic process"/>
    <property type="evidence" value="ECO:0007669"/>
    <property type="project" value="UniProtKB-ARBA"/>
</dbReference>
<dbReference type="GO" id="GO:0016114">
    <property type="term" value="P:terpenoid biosynthetic process"/>
    <property type="evidence" value="ECO:0007669"/>
    <property type="project" value="UniProtKB-UniRule"/>
</dbReference>
<dbReference type="GO" id="GO:0009228">
    <property type="term" value="P:thiamine biosynthetic process"/>
    <property type="evidence" value="ECO:0007669"/>
    <property type="project" value="UniProtKB-UniRule"/>
</dbReference>
<dbReference type="CDD" id="cd02007">
    <property type="entry name" value="TPP_DXS"/>
    <property type="match status" value="1"/>
</dbReference>
<dbReference type="CDD" id="cd07033">
    <property type="entry name" value="TPP_PYR_DXS_TK_like"/>
    <property type="match status" value="1"/>
</dbReference>
<dbReference type="FunFam" id="3.40.50.920:FF:000002">
    <property type="entry name" value="1-deoxy-D-xylulose-5-phosphate synthase"/>
    <property type="match status" value="1"/>
</dbReference>
<dbReference type="FunFam" id="3.40.50.970:FF:000005">
    <property type="entry name" value="1-deoxy-D-xylulose-5-phosphate synthase"/>
    <property type="match status" value="1"/>
</dbReference>
<dbReference type="Gene3D" id="3.40.50.920">
    <property type="match status" value="1"/>
</dbReference>
<dbReference type="Gene3D" id="3.40.50.970">
    <property type="match status" value="2"/>
</dbReference>
<dbReference type="HAMAP" id="MF_00315">
    <property type="entry name" value="DXP_synth"/>
    <property type="match status" value="1"/>
</dbReference>
<dbReference type="InterPro" id="IPR005477">
    <property type="entry name" value="Dxylulose-5-P_synthase"/>
</dbReference>
<dbReference type="InterPro" id="IPR029061">
    <property type="entry name" value="THDP-binding"/>
</dbReference>
<dbReference type="InterPro" id="IPR009014">
    <property type="entry name" value="Transketo_C/PFOR_II"/>
</dbReference>
<dbReference type="InterPro" id="IPR005475">
    <property type="entry name" value="Transketolase-like_Pyr-bd"/>
</dbReference>
<dbReference type="InterPro" id="IPR020826">
    <property type="entry name" value="Transketolase_BS"/>
</dbReference>
<dbReference type="InterPro" id="IPR033248">
    <property type="entry name" value="Transketolase_C"/>
</dbReference>
<dbReference type="InterPro" id="IPR049557">
    <property type="entry name" value="Transketolase_CS"/>
</dbReference>
<dbReference type="NCBIfam" id="TIGR00204">
    <property type="entry name" value="dxs"/>
    <property type="match status" value="1"/>
</dbReference>
<dbReference type="NCBIfam" id="NF003933">
    <property type="entry name" value="PRK05444.2-2"/>
    <property type="match status" value="1"/>
</dbReference>
<dbReference type="PANTHER" id="PTHR43322">
    <property type="entry name" value="1-D-DEOXYXYLULOSE 5-PHOSPHATE SYNTHASE-RELATED"/>
    <property type="match status" value="1"/>
</dbReference>
<dbReference type="PANTHER" id="PTHR43322:SF5">
    <property type="entry name" value="1-DEOXY-D-XYLULOSE-5-PHOSPHATE SYNTHASE, CHLOROPLASTIC"/>
    <property type="match status" value="1"/>
</dbReference>
<dbReference type="Pfam" id="PF13292">
    <property type="entry name" value="DXP_synthase_N"/>
    <property type="match status" value="1"/>
</dbReference>
<dbReference type="Pfam" id="PF02779">
    <property type="entry name" value="Transket_pyr"/>
    <property type="match status" value="1"/>
</dbReference>
<dbReference type="Pfam" id="PF02780">
    <property type="entry name" value="Transketolase_C"/>
    <property type="match status" value="1"/>
</dbReference>
<dbReference type="SMART" id="SM00861">
    <property type="entry name" value="Transket_pyr"/>
    <property type="match status" value="1"/>
</dbReference>
<dbReference type="SUPFAM" id="SSF52518">
    <property type="entry name" value="Thiamin diphosphate-binding fold (THDP-binding)"/>
    <property type="match status" value="2"/>
</dbReference>
<dbReference type="SUPFAM" id="SSF52922">
    <property type="entry name" value="TK C-terminal domain-like"/>
    <property type="match status" value="1"/>
</dbReference>
<dbReference type="PROSITE" id="PS00801">
    <property type="entry name" value="TRANSKETOLASE_1"/>
    <property type="match status" value="1"/>
</dbReference>
<dbReference type="PROSITE" id="PS00802">
    <property type="entry name" value="TRANSKETOLASE_2"/>
    <property type="match status" value="1"/>
</dbReference>
<reference key="1">
    <citation type="submission" date="2006-06" db="EMBL/GenBank/DDBJ databases">
        <title>Complete sequence of chromosome of Mesorhizobium sp. BNC1.</title>
        <authorList>
            <consortium name="US DOE Joint Genome Institute"/>
            <person name="Copeland A."/>
            <person name="Lucas S."/>
            <person name="Lapidus A."/>
            <person name="Barry K."/>
            <person name="Detter J.C."/>
            <person name="Glavina del Rio T."/>
            <person name="Hammon N."/>
            <person name="Israni S."/>
            <person name="Dalin E."/>
            <person name="Tice H."/>
            <person name="Pitluck S."/>
            <person name="Chertkov O."/>
            <person name="Brettin T."/>
            <person name="Bruce D."/>
            <person name="Han C."/>
            <person name="Tapia R."/>
            <person name="Gilna P."/>
            <person name="Schmutz J."/>
            <person name="Larimer F."/>
            <person name="Land M."/>
            <person name="Hauser L."/>
            <person name="Kyrpides N."/>
            <person name="Mikhailova N."/>
            <person name="Richardson P."/>
        </authorList>
    </citation>
    <scope>NUCLEOTIDE SEQUENCE [LARGE SCALE GENOMIC DNA]</scope>
    <source>
        <strain>BNC1</strain>
    </source>
</reference>
<proteinExistence type="inferred from homology"/>
<sequence>MSKIKNDKRETGHLKSPPETPLLNRVRFPSDLKQIPEEDLPQLAEELRAEMIDAVSQTGGHLGAGLGVVELTVALHYIFDTPHDRLIWDVGHQAYPHKILTGRRDRIRTLRQEDGLSGFTKRSESEYDPFGAAHSSTSISAGLGMAVARELSGGQRHVIAVIGDGALSAGMAYEAMNNAGALDARLIVILNDNDMSIAPPTGAMSTYLARLASGRAYRGIRDVGKKLTSHLGKSFDRAITRAVEHARGFVTGGTLFEEMGFFHIGPIDGHDLEALVPVLRNVRDNGTGPVLIHVVTQKGKGYPPAEAAADKYHGVAKFDVITGAQAKSPAGAPSYTKVFAQALVQEAREDKRIVAITAAMPSGTGLDLFEKEFPDRSFDVGIAEQHAVTFAAGLATEGYRPFAAIYSTFLQRAYDQVVHDVAIQNLPVRFAIDRAGFVGADGATHCGAFDVAYLATLPNMVVMAAADEAELKHMVRTAADHDEGPIAFRYPRGEGTGVPLPQRGEILKIGKGRIVREGSKIALLSLGTRLADCMIAAEELEAAGLSTTVADARFAKPLDADLIRRLAREHEVLVTVEEGSIGGFGAHVLHFLAHEGLLENGLKVRPLVMPDIFMDQAKPEKMYAKAGLDAAGIVKTVFAALGQAEQAARA</sequence>
<accession>Q11KE0</accession>
<evidence type="ECO:0000255" key="1">
    <source>
        <dbReference type="HAMAP-Rule" id="MF_00315"/>
    </source>
</evidence>
<evidence type="ECO:0000256" key="2">
    <source>
        <dbReference type="SAM" id="MobiDB-lite"/>
    </source>
</evidence>
<keyword id="KW-0414">Isoprene biosynthesis</keyword>
<keyword id="KW-0460">Magnesium</keyword>
<keyword id="KW-0479">Metal-binding</keyword>
<keyword id="KW-0784">Thiamine biosynthesis</keyword>
<keyword id="KW-0786">Thiamine pyrophosphate</keyword>
<keyword id="KW-0808">Transferase</keyword>
<comment type="function">
    <text evidence="1">Catalyzes the acyloin condensation reaction between C atoms 2 and 3 of pyruvate and glyceraldehyde 3-phosphate to yield 1-deoxy-D-xylulose-5-phosphate (DXP).</text>
</comment>
<comment type="catalytic activity">
    <reaction evidence="1">
        <text>D-glyceraldehyde 3-phosphate + pyruvate + H(+) = 1-deoxy-D-xylulose 5-phosphate + CO2</text>
        <dbReference type="Rhea" id="RHEA:12605"/>
        <dbReference type="ChEBI" id="CHEBI:15361"/>
        <dbReference type="ChEBI" id="CHEBI:15378"/>
        <dbReference type="ChEBI" id="CHEBI:16526"/>
        <dbReference type="ChEBI" id="CHEBI:57792"/>
        <dbReference type="ChEBI" id="CHEBI:59776"/>
        <dbReference type="EC" id="2.2.1.7"/>
    </reaction>
</comment>
<comment type="cofactor">
    <cofactor evidence="1">
        <name>Mg(2+)</name>
        <dbReference type="ChEBI" id="CHEBI:18420"/>
    </cofactor>
    <text evidence="1">Binds 1 Mg(2+) ion per subunit.</text>
</comment>
<comment type="cofactor">
    <cofactor evidence="1">
        <name>thiamine diphosphate</name>
        <dbReference type="ChEBI" id="CHEBI:58937"/>
    </cofactor>
    <text evidence="1">Binds 1 thiamine pyrophosphate per subunit.</text>
</comment>
<comment type="pathway">
    <text evidence="1">Metabolic intermediate biosynthesis; 1-deoxy-D-xylulose 5-phosphate biosynthesis; 1-deoxy-D-xylulose 5-phosphate from D-glyceraldehyde 3-phosphate and pyruvate: step 1/1.</text>
</comment>
<comment type="subunit">
    <text evidence="1">Homodimer.</text>
</comment>
<comment type="similarity">
    <text evidence="1">Belongs to the transketolase family. DXPS subfamily.</text>
</comment>
<feature type="chain" id="PRO_0000256436" description="1-deoxy-D-xylulose-5-phosphate synthase">
    <location>
        <begin position="1"/>
        <end position="650"/>
    </location>
</feature>
<feature type="region of interest" description="Disordered" evidence="2">
    <location>
        <begin position="1"/>
        <end position="23"/>
    </location>
</feature>
<feature type="compositionally biased region" description="Basic and acidic residues" evidence="2">
    <location>
        <begin position="1"/>
        <end position="13"/>
    </location>
</feature>
<feature type="binding site" evidence="1">
    <location>
        <position position="92"/>
    </location>
    <ligand>
        <name>thiamine diphosphate</name>
        <dbReference type="ChEBI" id="CHEBI:58937"/>
    </ligand>
</feature>
<feature type="binding site" evidence="1">
    <location>
        <begin position="133"/>
        <end position="135"/>
    </location>
    <ligand>
        <name>thiamine diphosphate</name>
        <dbReference type="ChEBI" id="CHEBI:58937"/>
    </ligand>
</feature>
<feature type="binding site" evidence="1">
    <location>
        <position position="164"/>
    </location>
    <ligand>
        <name>Mg(2+)</name>
        <dbReference type="ChEBI" id="CHEBI:18420"/>
    </ligand>
</feature>
<feature type="binding site" evidence="1">
    <location>
        <begin position="165"/>
        <end position="166"/>
    </location>
    <ligand>
        <name>thiamine diphosphate</name>
        <dbReference type="ChEBI" id="CHEBI:58937"/>
    </ligand>
</feature>
<feature type="binding site" evidence="1">
    <location>
        <position position="193"/>
    </location>
    <ligand>
        <name>Mg(2+)</name>
        <dbReference type="ChEBI" id="CHEBI:18420"/>
    </ligand>
</feature>
<feature type="binding site" evidence="1">
    <location>
        <position position="193"/>
    </location>
    <ligand>
        <name>thiamine diphosphate</name>
        <dbReference type="ChEBI" id="CHEBI:58937"/>
    </ligand>
</feature>
<feature type="binding site" evidence="1">
    <location>
        <position position="302"/>
    </location>
    <ligand>
        <name>thiamine diphosphate</name>
        <dbReference type="ChEBI" id="CHEBI:58937"/>
    </ligand>
</feature>
<feature type="binding site" evidence="1">
    <location>
        <position position="384"/>
    </location>
    <ligand>
        <name>thiamine diphosphate</name>
        <dbReference type="ChEBI" id="CHEBI:58937"/>
    </ligand>
</feature>
<name>DXS_CHESB</name>